<gene>
    <name evidence="3" type="primary">iri</name>
</gene>
<feature type="chain" id="PRO_0000456752" description="Rifampicin monooxygenase">
    <location>
        <begin position="1"/>
        <end position="479"/>
    </location>
</feature>
<feature type="binding site" evidence="1">
    <location>
        <position position="12"/>
    </location>
    <ligand>
        <name>FAD</name>
        <dbReference type="ChEBI" id="CHEBI:57692"/>
    </ligand>
</feature>
<feature type="binding site" evidence="1">
    <location>
        <position position="31"/>
    </location>
    <ligand>
        <name>FAD</name>
        <dbReference type="ChEBI" id="CHEBI:57692"/>
    </ligand>
</feature>
<feature type="binding site" evidence="1">
    <location>
        <position position="32"/>
    </location>
    <ligand>
        <name>FAD</name>
        <dbReference type="ChEBI" id="CHEBI:57692"/>
    </ligand>
</feature>
<feature type="binding site" evidence="1">
    <location>
        <position position="41"/>
    </location>
    <ligand>
        <name>FAD</name>
        <dbReference type="ChEBI" id="CHEBI:57692"/>
    </ligand>
</feature>
<feature type="binding site" evidence="1">
    <location>
        <position position="98"/>
    </location>
    <ligand>
        <name>FAD</name>
        <dbReference type="ChEBI" id="CHEBI:57692"/>
    </ligand>
</feature>
<feature type="binding site" evidence="1">
    <location>
        <position position="122"/>
    </location>
    <ligand>
        <name>FAD</name>
        <dbReference type="ChEBI" id="CHEBI:57692"/>
    </ligand>
</feature>
<feature type="binding site" evidence="1">
    <location>
        <position position="156"/>
    </location>
    <ligand>
        <name>FAD</name>
        <dbReference type="ChEBI" id="CHEBI:57692"/>
    </ligand>
</feature>
<feature type="binding site" evidence="1">
    <location>
        <position position="278"/>
    </location>
    <ligand>
        <name>FAD</name>
        <dbReference type="ChEBI" id="CHEBI:57692"/>
    </ligand>
</feature>
<feature type="binding site" evidence="1">
    <location>
        <position position="291"/>
    </location>
    <ligand>
        <name>FAD</name>
        <dbReference type="ChEBI" id="CHEBI:57692"/>
    </ligand>
</feature>
<feature type="binding site" evidence="1">
    <location>
        <position position="292"/>
    </location>
    <ligand>
        <name>FAD</name>
        <dbReference type="ChEBI" id="CHEBI:57692"/>
    </ligand>
</feature>
<comment type="function">
    <text evidence="2">Monooxygenase that can modify rifampicin, thereby inactivating its antibiotic activity.</text>
</comment>
<comment type="catalytic activity">
    <reaction evidence="1">
        <text>rifampicin + NADPH + O2 = rifampicin para-naphthoquinone carboxamide + NADP(+) + H2O + H(+)</text>
        <dbReference type="Rhea" id="RHEA:58696"/>
        <dbReference type="ChEBI" id="CHEBI:15377"/>
        <dbReference type="ChEBI" id="CHEBI:15378"/>
        <dbReference type="ChEBI" id="CHEBI:15379"/>
        <dbReference type="ChEBI" id="CHEBI:57783"/>
        <dbReference type="ChEBI" id="CHEBI:58349"/>
        <dbReference type="ChEBI" id="CHEBI:71365"/>
        <dbReference type="ChEBI" id="CHEBI:142731"/>
        <dbReference type="EC" id="1.14.13.211"/>
    </reaction>
    <physiologicalReaction direction="left-to-right" evidence="1">
        <dbReference type="Rhea" id="RHEA:58697"/>
    </physiologicalReaction>
</comment>
<comment type="catalytic activity">
    <reaction evidence="1">
        <text>rifampicin + NADH + O2 = rifampicin para-naphthoquinone carboxamide + NAD(+) + H2O + H(+)</text>
        <dbReference type="Rhea" id="RHEA:58712"/>
        <dbReference type="ChEBI" id="CHEBI:15377"/>
        <dbReference type="ChEBI" id="CHEBI:15378"/>
        <dbReference type="ChEBI" id="CHEBI:15379"/>
        <dbReference type="ChEBI" id="CHEBI:57540"/>
        <dbReference type="ChEBI" id="CHEBI:57945"/>
        <dbReference type="ChEBI" id="CHEBI:71365"/>
        <dbReference type="ChEBI" id="CHEBI:142731"/>
        <dbReference type="EC" id="1.14.13.211"/>
    </reaction>
    <physiologicalReaction direction="left-to-right" evidence="1">
        <dbReference type="Rhea" id="RHEA:58713"/>
    </physiologicalReaction>
</comment>
<comment type="cofactor">
    <cofactor evidence="1">
        <name>FAD</name>
        <dbReference type="ChEBI" id="CHEBI:57692"/>
    </cofactor>
</comment>
<comment type="similarity">
    <text evidence="4">Belongs to the rifampicin monooxygenase family.</text>
</comment>
<evidence type="ECO:0000250" key="1">
    <source>
        <dbReference type="UniProtKB" id="Q5YTV5"/>
    </source>
</evidence>
<evidence type="ECO:0000269" key="2">
    <source>
    </source>
</evidence>
<evidence type="ECO:0000303" key="3">
    <source>
    </source>
</evidence>
<evidence type="ECO:0000305" key="4"/>
<sequence length="479" mass="51885">MSDVIIVGAGPTGLMLAGELRLQGVDVVVVDKDEEPTQFVRALGIHVRSIEIMEQRGLLDKFLAHGRKYPLGGFFAGISKPAPAHLDTAHGYVLGIPQPEIDRILAEHATEVGADIQRGKRVVAIRQDTDNVAAELSDGTTLHARYLVGCDGGRSTVRKLRSTSVFPASRTSADTLIGEMDVTMPADELAAVVAEIRETHKRFGVGPAGNGAFRVVVPAAEVADGRATPTTLDDIKQQLLAIAGTDFGVHSPRWLSRFGDATRLADDYRRDRVFLAGDAAHIHPPMGGQGLNLGVQDAFNLGWKLAAEINGWAPVGLLDTYESERRPVAADVLDNTRAQAELISTAAGPQAVRRLISELMEFEDVKRYLTEKITAISIRYDFGEGDDLLGRRLRNIALTRGNLYDLMRSGRGLLLDQGGQLSVDGWSDRADHIVDTSTELEAPAVLLRPDGHVAWIGDAQAELDTQLSTWFGRSARDRA</sequence>
<name>ROX_RHOHA</name>
<protein>
    <recommendedName>
        <fullName evidence="4">Rifampicin monooxygenase</fullName>
        <shortName evidence="4">RIFMO</shortName>
        <ecNumber evidence="1">1.14.13.211</ecNumber>
    </recommendedName>
</protein>
<reference key="1">
    <citation type="journal article" date="1997" name="Antimicrob. Agents Chemother.">
        <title>Monooxygenase-like sequence of a Rhodococcus equi gene conferring increased resistance to rifampin by inactivating this antibiotic.</title>
        <authorList>
            <person name="Andersen S.J."/>
            <person name="Quan S."/>
            <person name="Gowan B."/>
            <person name="Dabbs E.R."/>
        </authorList>
    </citation>
    <scope>NUCLEOTIDE SEQUENCE [GENOMIC DNA]</scope>
    <scope>FUNCTION IN RIFAMPICIN RESISTANCE</scope>
    <source>
        <strain>ATCC 14887</strain>
    </source>
</reference>
<organism>
    <name type="scientific">Rhodococcus hoagii</name>
    <name type="common">Corynebacterium equii</name>
    <dbReference type="NCBI Taxonomy" id="43767"/>
    <lineage>
        <taxon>Bacteria</taxon>
        <taxon>Bacillati</taxon>
        <taxon>Actinomycetota</taxon>
        <taxon>Actinomycetes</taxon>
        <taxon>Mycobacteriales</taxon>
        <taxon>Nocardiaceae</taxon>
        <taxon>Prescottella</taxon>
    </lineage>
</organism>
<proteinExistence type="evidence at protein level"/>
<keyword id="KW-0274">FAD</keyword>
<keyword id="KW-0285">Flavoprotein</keyword>
<keyword id="KW-0503">Monooxygenase</keyword>
<keyword id="KW-0547">Nucleotide-binding</keyword>
<keyword id="KW-0560">Oxidoreductase</keyword>
<accession>P95598</accession>
<dbReference type="EC" id="1.14.13.211" evidence="1"/>
<dbReference type="EMBL" id="U56415">
    <property type="protein sequence ID" value="AAB41059.1"/>
    <property type="molecule type" value="Genomic_DNA"/>
</dbReference>
<dbReference type="RefSeq" id="WP_063851318.1">
    <property type="nucleotide sequence ID" value="NG_047911.1"/>
</dbReference>
<dbReference type="SMR" id="P95598"/>
<dbReference type="CARD" id="ARO:3002884">
    <property type="molecule name" value="iri"/>
    <property type="mechanism identifier" value="ARO:0001004"/>
    <property type="mechanism name" value="antibiotic inactivation"/>
</dbReference>
<dbReference type="KEGG" id="ag:AAB41059"/>
<dbReference type="BRENDA" id="1.14.13.211">
    <property type="organism ID" value="1646"/>
</dbReference>
<dbReference type="GO" id="GO:0071949">
    <property type="term" value="F:FAD binding"/>
    <property type="evidence" value="ECO:0007669"/>
    <property type="project" value="InterPro"/>
</dbReference>
<dbReference type="GO" id="GO:0016709">
    <property type="term" value="F:oxidoreductase activity, acting on paired donors, with incorporation or reduction of molecular oxygen, NAD(P)H as one donor, and incorporation of one atom of oxygen"/>
    <property type="evidence" value="ECO:0007669"/>
    <property type="project" value="UniProtKB-ARBA"/>
</dbReference>
<dbReference type="Gene3D" id="3.30.70.2450">
    <property type="match status" value="1"/>
</dbReference>
<dbReference type="Gene3D" id="3.40.30.120">
    <property type="match status" value="1"/>
</dbReference>
<dbReference type="Gene3D" id="3.50.50.60">
    <property type="entry name" value="FAD/NAD(P)-binding domain"/>
    <property type="match status" value="1"/>
</dbReference>
<dbReference type="InterPro" id="IPR002938">
    <property type="entry name" value="FAD-bd"/>
</dbReference>
<dbReference type="InterPro" id="IPR036188">
    <property type="entry name" value="FAD/NAD-bd_sf"/>
</dbReference>
<dbReference type="InterPro" id="IPR050641">
    <property type="entry name" value="RIFMO-like"/>
</dbReference>
<dbReference type="NCBIfam" id="NF000343">
    <property type="entry name" value="rif_mono_Iri"/>
    <property type="match status" value="1"/>
</dbReference>
<dbReference type="NCBIfam" id="NF033145">
    <property type="entry name" value="rif_monoox"/>
    <property type="match status" value="1"/>
</dbReference>
<dbReference type="PANTHER" id="PTHR43004:SF19">
    <property type="entry name" value="BINDING MONOOXYGENASE, PUTATIVE (JCVI)-RELATED"/>
    <property type="match status" value="1"/>
</dbReference>
<dbReference type="PANTHER" id="PTHR43004">
    <property type="entry name" value="TRK SYSTEM POTASSIUM UPTAKE PROTEIN"/>
    <property type="match status" value="1"/>
</dbReference>
<dbReference type="Pfam" id="PF01494">
    <property type="entry name" value="FAD_binding_3"/>
    <property type="match status" value="1"/>
</dbReference>
<dbReference type="Pfam" id="PF21274">
    <property type="entry name" value="Rng_hyd_C"/>
    <property type="match status" value="1"/>
</dbReference>
<dbReference type="PRINTS" id="PR00420">
    <property type="entry name" value="RNGMNOXGNASE"/>
</dbReference>
<dbReference type="SUPFAM" id="SSF51905">
    <property type="entry name" value="FAD/NAD(P)-binding domain"/>
    <property type="match status" value="1"/>
</dbReference>